<gene>
    <name evidence="9 11" type="primary">zdhhc13</name>
</gene>
<dbReference type="EMBL" id="CU041375">
    <property type="status" value="NOT_ANNOTATED_CDS"/>
    <property type="molecule type" value="Genomic_DNA"/>
</dbReference>
<dbReference type="EMBL" id="BC086723">
    <property type="protein sequence ID" value="AAH86723.1"/>
    <property type="molecule type" value="mRNA"/>
</dbReference>
<dbReference type="RefSeq" id="NP_001008650.2">
    <property type="nucleotide sequence ID" value="NM_001008650.3"/>
</dbReference>
<dbReference type="SMR" id="A0A0R4IQZ2"/>
<dbReference type="FunCoup" id="A0A0R4IQZ2">
    <property type="interactions" value="1275"/>
</dbReference>
<dbReference type="STRING" id="7955.ENSDARP00000142710"/>
<dbReference type="PaxDb" id="7955-ENSDARP00000094138"/>
<dbReference type="Ensembl" id="ENSDART00000173777">
    <property type="protein sequence ID" value="ENSDARP00000142710"/>
    <property type="gene ID" value="ENSDARG00000101144"/>
</dbReference>
<dbReference type="GeneID" id="494107"/>
<dbReference type="KEGG" id="dre:494107"/>
<dbReference type="AGR" id="ZFIN:ZDB-GENE-041212-79"/>
<dbReference type="CTD" id="54503"/>
<dbReference type="ZFIN" id="ZDB-GENE-041212-79">
    <property type="gene designation" value="zdhhc13"/>
</dbReference>
<dbReference type="eggNOG" id="KOG0509">
    <property type="taxonomic scope" value="Eukaryota"/>
</dbReference>
<dbReference type="InParanoid" id="A0A0R4IQZ2"/>
<dbReference type="OMA" id="RECQSHS"/>
<dbReference type="OrthoDB" id="6781668at2759"/>
<dbReference type="PhylomeDB" id="A0A0R4IQZ2"/>
<dbReference type="PRO" id="PR:A0A0R4IQZ2"/>
<dbReference type="Proteomes" id="UP000000437">
    <property type="component" value="Chromosome 7"/>
</dbReference>
<dbReference type="Bgee" id="ENSDARG00000101144">
    <property type="expression patterns" value="Expressed in cleaving embryo and 29 other cell types or tissues"/>
</dbReference>
<dbReference type="ExpressionAtlas" id="A0A0R4IQZ2">
    <property type="expression patterns" value="baseline and differential"/>
</dbReference>
<dbReference type="GO" id="GO:0030659">
    <property type="term" value="C:cytoplasmic vesicle membrane"/>
    <property type="evidence" value="ECO:0007669"/>
    <property type="project" value="UniProtKB-SubCell"/>
</dbReference>
<dbReference type="GO" id="GO:0000139">
    <property type="term" value="C:Golgi membrane"/>
    <property type="evidence" value="ECO:0007669"/>
    <property type="project" value="UniProtKB-SubCell"/>
</dbReference>
<dbReference type="GO" id="GO:0016409">
    <property type="term" value="F:palmitoyltransferase activity"/>
    <property type="evidence" value="ECO:0007669"/>
    <property type="project" value="InterPro"/>
</dbReference>
<dbReference type="GO" id="GO:0030509">
    <property type="term" value="P:BMP signaling pathway"/>
    <property type="evidence" value="ECO:0000315"/>
    <property type="project" value="ZFIN"/>
</dbReference>
<dbReference type="GO" id="GO:0030510">
    <property type="term" value="P:regulation of BMP signaling pathway"/>
    <property type="evidence" value="ECO:0000315"/>
    <property type="project" value="ZFIN"/>
</dbReference>
<dbReference type="GO" id="GO:0042665">
    <property type="term" value="P:regulation of ectodermal cell fate specification"/>
    <property type="evidence" value="ECO:0000315"/>
    <property type="project" value="ZFIN"/>
</dbReference>
<dbReference type="Gene3D" id="1.25.40.20">
    <property type="entry name" value="Ankyrin repeat-containing domain"/>
    <property type="match status" value="1"/>
</dbReference>
<dbReference type="InterPro" id="IPR002110">
    <property type="entry name" value="Ankyrin_rpt"/>
</dbReference>
<dbReference type="InterPro" id="IPR036770">
    <property type="entry name" value="Ankyrin_rpt-contain_sf"/>
</dbReference>
<dbReference type="InterPro" id="IPR001594">
    <property type="entry name" value="Palmitoyltrfase_DHHC"/>
</dbReference>
<dbReference type="PANTHER" id="PTHR24161">
    <property type="entry name" value="ANK_REP_REGION DOMAIN-CONTAINING PROTEIN-RELATED"/>
    <property type="match status" value="1"/>
</dbReference>
<dbReference type="PANTHER" id="PTHR24161:SF16">
    <property type="entry name" value="PALMITOYLTRANSFERASE ZDHHC13"/>
    <property type="match status" value="1"/>
</dbReference>
<dbReference type="Pfam" id="PF12796">
    <property type="entry name" value="Ank_2"/>
    <property type="match status" value="2"/>
</dbReference>
<dbReference type="Pfam" id="PF01529">
    <property type="entry name" value="DHHC"/>
    <property type="match status" value="1"/>
</dbReference>
<dbReference type="SMART" id="SM00248">
    <property type="entry name" value="ANK"/>
    <property type="match status" value="5"/>
</dbReference>
<dbReference type="SUPFAM" id="SSF48403">
    <property type="entry name" value="Ankyrin repeat"/>
    <property type="match status" value="1"/>
</dbReference>
<dbReference type="PROSITE" id="PS50297">
    <property type="entry name" value="ANK_REP_REGION"/>
    <property type="match status" value="1"/>
</dbReference>
<dbReference type="PROSITE" id="PS50088">
    <property type="entry name" value="ANK_REPEAT"/>
    <property type="match status" value="5"/>
</dbReference>
<dbReference type="PROSITE" id="PS50216">
    <property type="entry name" value="DHHC"/>
    <property type="match status" value="1"/>
</dbReference>
<evidence type="ECO:0000250" key="1">
    <source>
        <dbReference type="UniProtKB" id="Q8IUH5"/>
    </source>
</evidence>
<evidence type="ECO:0000250" key="2">
    <source>
        <dbReference type="UniProtKB" id="Q9CWU2"/>
    </source>
</evidence>
<evidence type="ECO:0000255" key="3"/>
<evidence type="ECO:0000255" key="4">
    <source>
        <dbReference type="PROSITE-ProRule" id="PRU00067"/>
    </source>
</evidence>
<evidence type="ECO:0000256" key="5">
    <source>
        <dbReference type="SAM" id="MobiDB-lite"/>
    </source>
</evidence>
<evidence type="ECO:0000269" key="6">
    <source>
    </source>
</evidence>
<evidence type="ECO:0000269" key="7">
    <source>
    </source>
</evidence>
<evidence type="ECO:0000303" key="8">
    <source>
    </source>
</evidence>
<evidence type="ECO:0000303" key="9">
    <source>
    </source>
</evidence>
<evidence type="ECO:0000305" key="10"/>
<evidence type="ECO:0000312" key="11">
    <source>
        <dbReference type="ZFIN" id="ZDB-GENE-041212-79"/>
    </source>
</evidence>
<protein>
    <recommendedName>
        <fullName evidence="10">Putative palmitoyltransferase ZDHHC13</fullName>
    </recommendedName>
    <alternativeName>
        <fullName evidence="8">DHHC domain-containing protein 13</fullName>
        <shortName evidence="8">DHHC-13</shortName>
    </alternativeName>
    <alternativeName>
        <fullName evidence="9">Zinc finger DHHC domain-containing protein 13</fullName>
    </alternativeName>
</protein>
<accession>A0A0R4IQZ2</accession>
<accession>Q5PRB8</accession>
<organism>
    <name type="scientific">Danio rerio</name>
    <name type="common">Zebrafish</name>
    <name type="synonym">Brachydanio rerio</name>
    <dbReference type="NCBI Taxonomy" id="7955"/>
    <lineage>
        <taxon>Eukaryota</taxon>
        <taxon>Metazoa</taxon>
        <taxon>Chordata</taxon>
        <taxon>Craniata</taxon>
        <taxon>Vertebrata</taxon>
        <taxon>Euteleostomi</taxon>
        <taxon>Actinopterygii</taxon>
        <taxon>Neopterygii</taxon>
        <taxon>Teleostei</taxon>
        <taxon>Ostariophysi</taxon>
        <taxon>Cypriniformes</taxon>
        <taxon>Danionidae</taxon>
        <taxon>Danioninae</taxon>
        <taxon>Danio</taxon>
    </lineage>
</organism>
<reference key="1">
    <citation type="journal article" date="2013" name="Nature">
        <title>The zebrafish reference genome sequence and its relationship to the human genome.</title>
        <authorList>
            <person name="Howe K."/>
            <person name="Clark M.D."/>
            <person name="Torroja C.F."/>
            <person name="Torrance J."/>
            <person name="Berthelot C."/>
            <person name="Muffato M."/>
            <person name="Collins J.E."/>
            <person name="Humphray S."/>
            <person name="McLaren K."/>
            <person name="Matthews L."/>
            <person name="McLaren S."/>
            <person name="Sealy I."/>
            <person name="Caccamo M."/>
            <person name="Churcher C."/>
            <person name="Scott C."/>
            <person name="Barrett J.C."/>
            <person name="Koch R."/>
            <person name="Rauch G.J."/>
            <person name="White S."/>
            <person name="Chow W."/>
            <person name="Kilian B."/>
            <person name="Quintais L.T."/>
            <person name="Guerra-Assuncao J.A."/>
            <person name="Zhou Y."/>
            <person name="Gu Y."/>
            <person name="Yen J."/>
            <person name="Vogel J.H."/>
            <person name="Eyre T."/>
            <person name="Redmond S."/>
            <person name="Banerjee R."/>
            <person name="Chi J."/>
            <person name="Fu B."/>
            <person name="Langley E."/>
            <person name="Maguire S.F."/>
            <person name="Laird G.K."/>
            <person name="Lloyd D."/>
            <person name="Kenyon E."/>
            <person name="Donaldson S."/>
            <person name="Sehra H."/>
            <person name="Almeida-King J."/>
            <person name="Loveland J."/>
            <person name="Trevanion S."/>
            <person name="Jones M."/>
            <person name="Quail M."/>
            <person name="Willey D."/>
            <person name="Hunt A."/>
            <person name="Burton J."/>
            <person name="Sims S."/>
            <person name="McLay K."/>
            <person name="Plumb B."/>
            <person name="Davis J."/>
            <person name="Clee C."/>
            <person name="Oliver K."/>
            <person name="Clark R."/>
            <person name="Riddle C."/>
            <person name="Elliot D."/>
            <person name="Threadgold G."/>
            <person name="Harden G."/>
            <person name="Ware D."/>
            <person name="Begum S."/>
            <person name="Mortimore B."/>
            <person name="Kerry G."/>
            <person name="Heath P."/>
            <person name="Phillimore B."/>
            <person name="Tracey A."/>
            <person name="Corby N."/>
            <person name="Dunn M."/>
            <person name="Johnson C."/>
            <person name="Wood J."/>
            <person name="Clark S."/>
            <person name="Pelan S."/>
            <person name="Griffiths G."/>
            <person name="Smith M."/>
            <person name="Glithero R."/>
            <person name="Howden P."/>
            <person name="Barker N."/>
            <person name="Lloyd C."/>
            <person name="Stevens C."/>
            <person name="Harley J."/>
            <person name="Holt K."/>
            <person name="Panagiotidis G."/>
            <person name="Lovell J."/>
            <person name="Beasley H."/>
            <person name="Henderson C."/>
            <person name="Gordon D."/>
            <person name="Auger K."/>
            <person name="Wright D."/>
            <person name="Collins J."/>
            <person name="Raisen C."/>
            <person name="Dyer L."/>
            <person name="Leung K."/>
            <person name="Robertson L."/>
            <person name="Ambridge K."/>
            <person name="Leongamornlert D."/>
            <person name="McGuire S."/>
            <person name="Gilderthorp R."/>
            <person name="Griffiths C."/>
            <person name="Manthravadi D."/>
            <person name="Nichol S."/>
            <person name="Barker G."/>
            <person name="Whitehead S."/>
            <person name="Kay M."/>
            <person name="Brown J."/>
            <person name="Murnane C."/>
            <person name="Gray E."/>
            <person name="Humphries M."/>
            <person name="Sycamore N."/>
            <person name="Barker D."/>
            <person name="Saunders D."/>
            <person name="Wallis J."/>
            <person name="Babbage A."/>
            <person name="Hammond S."/>
            <person name="Mashreghi-Mohammadi M."/>
            <person name="Barr L."/>
            <person name="Martin S."/>
            <person name="Wray P."/>
            <person name="Ellington A."/>
            <person name="Matthews N."/>
            <person name="Ellwood M."/>
            <person name="Woodmansey R."/>
            <person name="Clark G."/>
            <person name="Cooper J."/>
            <person name="Tromans A."/>
            <person name="Grafham D."/>
            <person name="Skuce C."/>
            <person name="Pandian R."/>
            <person name="Andrews R."/>
            <person name="Harrison E."/>
            <person name="Kimberley A."/>
            <person name="Garnett J."/>
            <person name="Fosker N."/>
            <person name="Hall R."/>
            <person name="Garner P."/>
            <person name="Kelly D."/>
            <person name="Bird C."/>
            <person name="Palmer S."/>
            <person name="Gehring I."/>
            <person name="Berger A."/>
            <person name="Dooley C.M."/>
            <person name="Ersan-Urun Z."/>
            <person name="Eser C."/>
            <person name="Geiger H."/>
            <person name="Geisler M."/>
            <person name="Karotki L."/>
            <person name="Kirn A."/>
            <person name="Konantz J."/>
            <person name="Konantz M."/>
            <person name="Oberlander M."/>
            <person name="Rudolph-Geiger S."/>
            <person name="Teucke M."/>
            <person name="Lanz C."/>
            <person name="Raddatz G."/>
            <person name="Osoegawa K."/>
            <person name="Zhu B."/>
            <person name="Rapp A."/>
            <person name="Widaa S."/>
            <person name="Langford C."/>
            <person name="Yang F."/>
            <person name="Schuster S.C."/>
            <person name="Carter N.P."/>
            <person name="Harrow J."/>
            <person name="Ning Z."/>
            <person name="Herrero J."/>
            <person name="Searle S.M."/>
            <person name="Enright A."/>
            <person name="Geisler R."/>
            <person name="Plasterk R.H."/>
            <person name="Lee C."/>
            <person name="Westerfield M."/>
            <person name="de Jong P.J."/>
            <person name="Zon L.I."/>
            <person name="Postlethwait J.H."/>
            <person name="Nusslein-Volhard C."/>
            <person name="Hubbard T.J."/>
            <person name="Roest Crollius H."/>
            <person name="Rogers J."/>
            <person name="Stemple D.L."/>
        </authorList>
    </citation>
    <scope>NUCLEOTIDE SEQUENCE [LARGE SCALE GENOMIC DNA]</scope>
    <source>
        <strain>Tuebingen</strain>
    </source>
</reference>
<reference key="2">
    <citation type="submission" date="2004-12" db="EMBL/GenBank/DDBJ databases">
        <authorList>
            <consortium name="NIH - Zebrafish Gene Collection (ZGC) project"/>
        </authorList>
    </citation>
    <scope>NUCLEOTIDE SEQUENCE [LARGE SCALE MRNA]</scope>
    <source>
        <tissue>Olfactory epithelium</tissue>
    </source>
</reference>
<reference key="3">
    <citation type="journal article" date="2015" name="Neurotoxicol. Teratol.">
        <title>2-Bromopalmitate impairs neural stem/progenitor cell proliferation, promotes cell apoptosis and induces malformation in zebrafish embryonic brain.</title>
        <authorList>
            <person name="Wang C."/>
            <person name="Chen X."/>
            <person name="Shi W."/>
            <person name="Wang F."/>
            <person name="Du Z."/>
            <person name="Li X."/>
            <person name="Yao Y."/>
            <person name="Liu T."/>
            <person name="Shao T."/>
            <person name="Li G."/>
            <person name="Hao A."/>
        </authorList>
    </citation>
    <scope>DEVELOPMENTAL STAGE</scope>
</reference>
<reference key="4">
    <citation type="journal article" date="2016" name="Biochem. Biophys. Res. Commun.">
        <title>Protein palmitoylation activate zygotic gene expression during the maternal-to-zygotic transition.</title>
        <authorList>
            <person name="Du Z."/>
            <person name="Chen X."/>
            <person name="Li X."/>
            <person name="He K."/>
            <person name="Ji S."/>
            <person name="Shi W."/>
            <person name="Hao A."/>
        </authorList>
    </citation>
    <scope>DEVELOPMENTAL STAGE</scope>
</reference>
<comment type="function">
    <text evidence="2">Putative palmitoyltransferase that could catalyze the addition of palmitate onto various protein substrates.</text>
</comment>
<comment type="subcellular location">
    <subcellularLocation>
        <location evidence="2">Golgi apparatus membrane</location>
        <topology evidence="3">Multi-pass membrane protein</topology>
    </subcellularLocation>
    <subcellularLocation>
        <location evidence="2">Cytoplasmic vesicle membrane</location>
        <topology evidence="3">Multi-pass membrane protein</topology>
    </subcellularLocation>
</comment>
<comment type="developmental stage">
    <text evidence="6 7">Probably maternally supplied, the zygotic expression becomes significant at shield stage (6 hpf) and then decreases after 7.5 hpf but is still detected at 24 hpf.</text>
</comment>
<comment type="domain">
    <text evidence="1">The DHHC domain is required for palmitoyltransferase activity.</text>
</comment>
<comment type="similarity">
    <text evidence="10">Belongs to the DHHC palmitoyltransferase family. AKR/ZDHHC17 subfamily.</text>
</comment>
<comment type="caution">
    <text evidence="10">Although it belongs to the DHHC palmitoyltransferase family, lacks the conserved active site cysteine residue at position 479 and may lack catalytic activity.</text>
</comment>
<keyword id="KW-0040">ANK repeat</keyword>
<keyword id="KW-0968">Cytoplasmic vesicle</keyword>
<keyword id="KW-0333">Golgi apparatus</keyword>
<keyword id="KW-0472">Membrane</keyword>
<keyword id="KW-1185">Reference proteome</keyword>
<keyword id="KW-0677">Repeat</keyword>
<keyword id="KW-0812">Transmembrane</keyword>
<keyword id="KW-1133">Transmembrane helix</keyword>
<sequence length="645" mass="71440">MDWSEGDGSHSHGHMGDSCHGHGGGHSHGHGHSHGGSGFGGFMPAGFHGQLVPGPMDPTQQPRKSSHPEDSSSWDIIKATQFGALERCKELVEAGYDVRQPDKENVTLLHWAAINNRADIVKYYISKGAVIDQLGGDLNSTPLHWAIRQGHLSMVIQLMRYGADPSLADGEGYRGLHLAVLFQNMPIAAYLMAKGQEVDLPDLNGQTPLMLAAQKIIGPEPTNFLIKCNASVNAVDKVNRNSPLHCAVLAGNVDSVHILLEAGASVDMQNDNGHTAIDLAQQVHSPLLIHMLSVVKTERIKANSACLKLLNRYKVCLQSVFSVVVVGAFGAILDMRTESWLLKGILLACIMAVINLASRQLATVAVRSLIPSTGLIASVFWMVVTWVLWFLPDEPSAAVQMLFTVNITAVLYYYIRSCRTDPGHVKATEEEKKKNIVVLAEAGCLDPRIFCTSCMMRKPMRANHCFSCNACVAKQDHHSIWINGCIGARNHPFFVLFLVALNFLCIWMFYGSITYWSRHCPLHYSEEGIWGALTALMGCSPWLLYVFCFVFFHTTWASILLVLQLYQIAFLGLTTSERANLMHRQRKLPQAVSLRQNPFNHGVVKNLVNFFQWRFCGLCKPMVLDWTQQHPMGLGRDMFSSPDAV</sequence>
<name>ZDH13_DANRE</name>
<proteinExistence type="evidence at transcript level"/>
<feature type="chain" id="PRO_0000451060" description="Putative palmitoyltransferase ZDHHC13">
    <location>
        <begin position="1"/>
        <end position="645"/>
    </location>
</feature>
<feature type="topological domain" description="Cytoplasmic" evidence="10">
    <location>
        <begin position="1"/>
        <end position="314"/>
    </location>
</feature>
<feature type="transmembrane region" description="Helical" evidence="3">
    <location>
        <begin position="315"/>
        <end position="335"/>
    </location>
</feature>
<feature type="topological domain" description="Lumenal" evidence="10">
    <location>
        <position position="336"/>
    </location>
</feature>
<feature type="transmembrane region" description="Helical" evidence="3">
    <location>
        <begin position="337"/>
        <end position="357"/>
    </location>
</feature>
<feature type="topological domain" description="Cytoplasmic" evidence="10">
    <location>
        <begin position="358"/>
        <end position="369"/>
    </location>
</feature>
<feature type="transmembrane region" description="Helical" evidence="3">
    <location>
        <begin position="370"/>
        <end position="390"/>
    </location>
</feature>
<feature type="topological domain" description="Lumenal" evidence="10">
    <location>
        <begin position="391"/>
        <end position="394"/>
    </location>
</feature>
<feature type="transmembrane region" description="Helical" evidence="3">
    <location>
        <begin position="395"/>
        <end position="415"/>
    </location>
</feature>
<feature type="topological domain" description="Cytoplasmic" evidence="10">
    <location>
        <begin position="416"/>
        <end position="492"/>
    </location>
</feature>
<feature type="transmembrane region" description="Helical" evidence="3">
    <location>
        <begin position="493"/>
        <end position="513"/>
    </location>
</feature>
<feature type="topological domain" description="Lumenal" evidence="10">
    <location>
        <begin position="514"/>
        <end position="542"/>
    </location>
</feature>
<feature type="transmembrane region" description="Helical" evidence="3">
    <location>
        <begin position="543"/>
        <end position="563"/>
    </location>
</feature>
<feature type="topological domain" description="Cytoplasmic" evidence="10">
    <location>
        <begin position="564"/>
        <end position="645"/>
    </location>
</feature>
<feature type="repeat" description="ANK 1" evidence="3">
    <location>
        <begin position="104"/>
        <end position="133"/>
    </location>
</feature>
<feature type="repeat" description="ANK 2" evidence="3">
    <location>
        <begin position="138"/>
        <end position="167"/>
    </location>
</feature>
<feature type="repeat" description="ANK 3" evidence="3">
    <location>
        <begin position="171"/>
        <end position="200"/>
    </location>
</feature>
<feature type="repeat" description="ANK 4" evidence="3">
    <location>
        <begin position="204"/>
        <end position="234"/>
    </location>
</feature>
<feature type="repeat" description="ANK 5" evidence="3">
    <location>
        <begin position="239"/>
        <end position="268"/>
    </location>
</feature>
<feature type="domain" description="DHHC" evidence="4">
    <location>
        <begin position="449"/>
        <end position="499"/>
    </location>
</feature>
<feature type="region of interest" description="Disordered" evidence="5">
    <location>
        <begin position="1"/>
        <end position="73"/>
    </location>
</feature>
<feature type="compositionally biased region" description="Basic and acidic residues" evidence="5">
    <location>
        <begin position="7"/>
        <end position="20"/>
    </location>
</feature>
<feature type="compositionally biased region" description="Basic residues" evidence="5">
    <location>
        <begin position="23"/>
        <end position="33"/>
    </location>
</feature>
<feature type="compositionally biased region" description="Gly residues" evidence="5">
    <location>
        <begin position="34"/>
        <end position="43"/>
    </location>
</feature>
<feature type="sequence conflict" description="In Ref. 2; AAH86723." evidence="10" ref="2">
    <original>L</original>
    <variation>F</variation>
    <location>
        <position position="176"/>
    </location>
</feature>
<feature type="sequence conflict" description="In Ref. 2; AAH86723." evidence="10" ref="2">
    <original>P</original>
    <variation>L</variation>
    <location>
        <position position="219"/>
    </location>
</feature>
<feature type="sequence conflict" description="In Ref. 2; AAH86723." evidence="10" ref="2">
    <original>E</original>
    <variation>G</variation>
    <location>
        <position position="527"/>
    </location>
</feature>